<reference key="1">
    <citation type="journal article" date="1995" name="Fish. Sci.">
        <title>Isolation and amino acid sequences of polypeptide toxins in the Caribbean sea anemone Condylactis passiflora.</title>
        <authorList>
            <person name="Shiomi K."/>
            <person name="Lin X.Y."/>
            <person name="Nagashima Y."/>
            <person name="Ishida M."/>
        </authorList>
    </citation>
    <scope>PROTEIN SEQUENCE</scope>
    <scope>HYDROXYLATION AT PRO-3</scope>
    <scope>SUBCELLULAR LOCATION</scope>
    <scope>TOXIC DOSE</scope>
</reference>
<reference key="2">
    <citation type="journal article" date="2009" name="Toxicon">
        <title>Actions of sea anemone type 1 neurotoxins on voltage-gated sodium channel isoforms.</title>
        <authorList>
            <person name="Wanke E."/>
            <person name="Zaharenko A.J."/>
            <person name="Redaelli E."/>
            <person name="Schiavon E."/>
        </authorList>
    </citation>
    <scope>REVIEW</scope>
</reference>
<reference key="3">
    <citation type="journal article" date="2012" name="Toxicon">
        <title>Development of a rational nomenclature for naming peptide and protein toxins from sea anemones.</title>
        <authorList>
            <person name="Oliveira J.S."/>
            <person name="Fuentes-Silva D."/>
            <person name="King G.F."/>
        </authorList>
    </citation>
    <scope>NOMENCLATURE</scope>
</reference>
<dbReference type="SMR" id="P0CH42"/>
<dbReference type="GO" id="GO:0005576">
    <property type="term" value="C:extracellular region"/>
    <property type="evidence" value="ECO:0007669"/>
    <property type="project" value="UniProtKB-SubCell"/>
</dbReference>
<dbReference type="GO" id="GO:0042151">
    <property type="term" value="C:nematocyst"/>
    <property type="evidence" value="ECO:0007669"/>
    <property type="project" value="UniProtKB-SubCell"/>
</dbReference>
<dbReference type="GO" id="GO:0017080">
    <property type="term" value="F:sodium channel regulator activity"/>
    <property type="evidence" value="ECO:0007669"/>
    <property type="project" value="UniProtKB-KW"/>
</dbReference>
<dbReference type="GO" id="GO:0090729">
    <property type="term" value="F:toxin activity"/>
    <property type="evidence" value="ECO:0007669"/>
    <property type="project" value="UniProtKB-KW"/>
</dbReference>
<dbReference type="Gene3D" id="2.20.20.10">
    <property type="entry name" value="Anthopleurin-A"/>
    <property type="match status" value="1"/>
</dbReference>
<dbReference type="InterPro" id="IPR023355">
    <property type="entry name" value="Myo_ane_neurotoxin_sf"/>
</dbReference>
<dbReference type="Pfam" id="PF00706">
    <property type="entry name" value="Toxin_4"/>
    <property type="match status" value="1"/>
</dbReference>
<dbReference type="SUPFAM" id="SSF57392">
    <property type="entry name" value="Defensin-like"/>
    <property type="match status" value="1"/>
</dbReference>
<name>NA1B_CONGI</name>
<keyword id="KW-0903">Direct protein sequencing</keyword>
<keyword id="KW-1015">Disulfide bond</keyword>
<keyword id="KW-0379">Hydroxylation</keyword>
<keyword id="KW-0872">Ion channel impairing toxin</keyword>
<keyword id="KW-0166">Nematocyst</keyword>
<keyword id="KW-0528">Neurotoxin</keyword>
<keyword id="KW-0964">Secreted</keyword>
<keyword id="KW-0800">Toxin</keyword>
<keyword id="KW-0738">Voltage-gated sodium channel impairing toxin</keyword>
<accession>P0CH42</accession>
<sequence>GVPCRCDSDGPSVHGNTLSGTVWVGSCASGWHKCNTEHNIFHECCKE</sequence>
<comment type="function">
    <text evidence="1">Binds voltage-dependently at site 3 of sodium channels (Nav) and inhibits the inactivation, thereby blocking neuronal transmission (By similarity).</text>
</comment>
<comment type="subcellular location">
    <subcellularLocation>
        <location evidence="3">Secreted</location>
    </subcellularLocation>
    <subcellularLocation>
        <location evidence="7">Nematocyst</location>
    </subcellularLocation>
</comment>
<comment type="toxic dose">
    <text evidence="3">The minimum lethal dose against crabs is 7.3 mg/kg.</text>
</comment>
<comment type="similarity">
    <text evidence="7">Belongs to the sea anemone sodium channel inhibitory toxin family. Type I subfamily.</text>
</comment>
<comment type="caution">
    <text evidence="7">Since the species C.passiflora is considered as a synonym of C.gigantea, the protein name was updated from Delta-actitoxin-Cps1a to Delta-actitoxin-Cgg1b.</text>
</comment>
<feature type="chain" id="PRO_0000397963" description="Delta-actitoxin-Cgg1b" evidence="3">
    <location>
        <begin position="1"/>
        <end position="47"/>
    </location>
</feature>
<feature type="modified residue" description="Hydroxyproline" evidence="3">
    <location>
        <position position="3"/>
    </location>
</feature>
<feature type="disulfide bond" evidence="2">
    <location>
        <begin position="4"/>
        <end position="44"/>
    </location>
</feature>
<feature type="disulfide bond" evidence="2">
    <location>
        <begin position="6"/>
        <end position="34"/>
    </location>
</feature>
<feature type="disulfide bond" evidence="2">
    <location>
        <begin position="27"/>
        <end position="45"/>
    </location>
</feature>
<organism>
    <name type="scientific">Condylactis gigantea</name>
    <name type="common">Giant Caribbean anemone</name>
    <name type="synonym">Condylactis passiflora</name>
    <dbReference type="NCBI Taxonomy" id="47073"/>
    <lineage>
        <taxon>Eukaryota</taxon>
        <taxon>Metazoa</taxon>
        <taxon>Cnidaria</taxon>
        <taxon>Anthozoa</taxon>
        <taxon>Hexacorallia</taxon>
        <taxon>Actiniaria</taxon>
        <taxon>Actiniidae</taxon>
        <taxon>Condylactis</taxon>
    </lineage>
</organism>
<protein>
    <recommendedName>
        <fullName evidence="7">Delta-actitoxin-Cgg1b</fullName>
        <shortName evidence="7">Delta-AITX-Cgg1b</shortName>
    </recommendedName>
    <alternativeName>
        <fullName evidence="7">Cp-1</fullName>
        <shortName evidence="6">Cp I</shortName>
        <shortName evidence="4">CpI</shortName>
    </alternativeName>
    <alternativeName>
        <fullName evidence="5">Delta-actitoxin-Cps1a</fullName>
        <shortName evidence="5">Delta-AITX-Cps1a</shortName>
    </alternativeName>
</protein>
<proteinExistence type="evidence at protein level"/>
<evidence type="ECO:0000250" key="1"/>
<evidence type="ECO:0000250" key="2">
    <source>
        <dbReference type="UniProtKB" id="P0C280"/>
    </source>
</evidence>
<evidence type="ECO:0000269" key="3">
    <source ref="1"/>
</evidence>
<evidence type="ECO:0000303" key="4">
    <source>
    </source>
</evidence>
<evidence type="ECO:0000303" key="5">
    <source>
    </source>
</evidence>
<evidence type="ECO:0000303" key="6">
    <source ref="1"/>
</evidence>
<evidence type="ECO:0000305" key="7"/>